<sequence length="595" mass="64241">MARFNARLFSIAILGFQVARSAITYQHPDDLPGDVDYDFIVAGGGTAGLVVASRLGENSKWNVLVIEAGPSNKDVFATRVPGLAETLPTSHIDWNYTTVPQQALGGRSLNYSRAMILGGCSTHNGMVYTRGSKDDWNKWADVTGNRDLSWDSILPIMKKVEKFSEDFSDQSVEGHIDPSVHGNDGKLSVVASYTNVSFNDLLLETTKELVDEFPFKLDMNDGNPVGLTWNQYTIDHNAERSSSATAYLESTGDNVHVLLNTRVTRIVPTGKTNFRTVEFAVDAGGPRKQLTAKKEVILSGGFIASPQILMNSGIGDQEALKAVGVDTLVNNPSVGKNVSDQAATLVLFDTTLPNTDFDVDAAIVEWNNSHAGPLATGAPLNHLIWVRLSDDKLSGSDPSSGKDSPHIEFQFSKISHRIPPANVPNQVALPSQDSIGVVIQFSVVNLNSISRGSVSLNDNNPFSHPLIDLNMLGEEQDIAILREGVHSARRMLSSEAFKPFVNGSVHPPANITSDEDLDAFLHTTTKSYLHGVGTLSMSPQNASWGVVDPDFRVKGTTGLRVVDASVIPSVPAGHTQTPVYAFAEYASIVIAKSYN</sequence>
<organism>
    <name type="scientific">Agaricus campestris</name>
    <name type="common">Field mushroom</name>
    <dbReference type="NCBI Taxonomy" id="56157"/>
    <lineage>
        <taxon>Eukaryota</taxon>
        <taxon>Fungi</taxon>
        <taxon>Dikarya</taxon>
        <taxon>Basidiomycota</taxon>
        <taxon>Agaricomycotina</taxon>
        <taxon>Agaricomycetes</taxon>
        <taxon>Agaricomycetidae</taxon>
        <taxon>Agaricales</taxon>
        <taxon>Agaricineae</taxon>
        <taxon>Agaricaceae</taxon>
        <taxon>Agaricus</taxon>
    </lineage>
</organism>
<feature type="signal peptide" evidence="3">
    <location>
        <begin position="1"/>
        <end position="21"/>
    </location>
</feature>
<feature type="chain" id="PRO_0000431291" description="Pyranose dehydrogenase">
    <location>
        <begin position="22"/>
        <end position="595"/>
    </location>
</feature>
<feature type="active site" description="Proton acceptor" evidence="1">
    <location>
        <position position="530"/>
    </location>
</feature>
<feature type="active site" evidence="2">
    <location>
        <position position="574"/>
    </location>
</feature>
<feature type="modified residue" description="Tele-8alpha-FAD histidine" evidence="2">
    <location>
        <position position="123"/>
    </location>
</feature>
<feature type="glycosylation site" description="N-linked (GlcNAc...) asparagine" evidence="4">
    <location>
        <position position="95"/>
    </location>
</feature>
<feature type="glycosylation site" description="N-linked (GlcNAc...) asparagine" evidence="4">
    <location>
        <position position="110"/>
    </location>
</feature>
<feature type="glycosylation site" description="N-linked (GlcNAc...) asparagine" evidence="4">
    <location>
        <position position="195"/>
    </location>
</feature>
<feature type="glycosylation site" description="N-linked (GlcNAc...) asparagine" evidence="4">
    <location>
        <position position="337"/>
    </location>
</feature>
<feature type="glycosylation site" description="N-linked (GlcNAc...) asparagine" evidence="4">
    <location>
        <position position="367"/>
    </location>
</feature>
<feature type="glycosylation site" description="N-linked (GlcNAc...) asparagine" evidence="4">
    <location>
        <position position="502"/>
    </location>
</feature>
<feature type="glycosylation site" description="N-linked (GlcNAc...) asparagine" evidence="4">
    <location>
        <position position="510"/>
    </location>
</feature>
<feature type="glycosylation site" description="N-linked (GlcNAc...) asparagine" evidence="4">
    <location>
        <position position="541"/>
    </location>
</feature>
<keyword id="KW-0119">Carbohydrate metabolism</keyword>
<keyword id="KW-0274">FAD</keyword>
<keyword id="KW-0285">Flavoprotein</keyword>
<keyword id="KW-0325">Glycoprotein</keyword>
<keyword id="KW-0560">Oxidoreductase</keyword>
<keyword id="KW-0964">Secreted</keyword>
<keyword id="KW-0732">Signal</keyword>
<comment type="function">
    <text evidence="5">Catalyzes the single-oxidation or sequential double oxidation reaction of carbohydrates primarily at carbon-2 and/or carbon-3 with the concomitant reduction of the flavin. The enzyme exhibits a broad sugar substrate specificity, oxidizing different aldopyranoses to the corresponding C-1, C-2, C-3 or C-1,2, C-2,3 and C-3,4 (di)dehydro sugars with substrate-specific regioselectivity. Accepts only a narrow range of electron acceptors such as substituted benzoquinones and complexed metal ions and reacts extremely slowly with O(2) as acceptor. May play a role in the natural recycling of plant matter by oxidizing all major monosaccharides in lignocellulose and by reducing quinone compounds or reactive radical species generated during lignin depolymerization.</text>
</comment>
<comment type="catalytic activity">
    <reaction evidence="5">
        <text>pyranose + acceptor = pyranos-2-ulose + reduced acceptor.</text>
        <dbReference type="EC" id="1.1.99.29"/>
    </reaction>
</comment>
<comment type="catalytic activity">
    <reaction evidence="5">
        <text>pyranose + acceptor = pyranos-3-ulose + reduced acceptor.</text>
        <dbReference type="EC" id="1.1.99.29"/>
    </reaction>
</comment>
<comment type="catalytic activity">
    <reaction evidence="5">
        <text>pyranose + acceptor = pyranos-2,3-diulose + reduced acceptor.</text>
        <dbReference type="EC" id="1.1.99.29"/>
    </reaction>
</comment>
<comment type="catalytic activity">
    <reaction evidence="5">
        <text>a pyranoside + acceptor = a pyranosid-3-ulose + reduced acceptor.</text>
        <dbReference type="EC" id="1.1.99.29"/>
    </reaction>
</comment>
<comment type="catalytic activity">
    <reaction evidence="5">
        <text>a pyranoside + acceptor = a pyranosid-3,4-diulose + reduced acceptor.</text>
        <dbReference type="EC" id="1.1.99.29"/>
    </reaction>
</comment>
<comment type="cofactor">
    <cofactor evidence="2">
        <name>FAD</name>
        <dbReference type="ChEBI" id="CHEBI:57692"/>
    </cofactor>
    <text evidence="2">Binds 1 FAD covalently per subunit.</text>
</comment>
<comment type="biophysicochemical properties">
    <kinetics>
        <KM evidence="5">0.35 mM for D-glucose (with ferricenium ion (Fc(+)) as electron acceptor)</KM>
        <KM evidence="5">7.13 mM for D-galactose (with ferricenium ion (Fc(+)) as electron acceptor)</KM>
        <KM evidence="5">4.19 mM for D-xylose (with ferricenium ion (Fc(+)) as electron acceptor)</KM>
        <KM evidence="5">4.23 mM for L-arabinose (with ferricenium ion (Fc(+)) as electron acceptor)</KM>
        <KM evidence="5">53.16 mM for lactose (with ferricenium ion (Fc(+)) as electron acceptor)</KM>
        <KM evidence="5">1.19 mM for ferricenium (at pH 8.5 with D-glucose as substrate)</KM>
        <KM evidence="5">0.12 mM for 1,4-benzoquinone (at pH 4.0 with D-glucose as substrate)</KM>
        <KM evidence="5">0.11 uM for 2,6-dichloroindophenol (DCIP) (at pH 4.0 with D-glucose as substrate)</KM>
    </kinetics>
    <phDependence>
        <text evidence="5">Optimum pH is 8.5 with ferricenium ion (Fc(+)) and 7.0 with 1,4-benzoquinone as electron acceptor, respectively.</text>
    </phDependence>
</comment>
<comment type="subunit">
    <text evidence="5">Monomer.</text>
</comment>
<comment type="subcellular location">
    <subcellularLocation>
        <location evidence="2">Secreted</location>
    </subcellularLocation>
</comment>
<comment type="PTM">
    <text evidence="5">N-glycosylated.</text>
</comment>
<comment type="similarity">
    <text evidence="7">Belongs to the GMC oxidoreductase family.</text>
</comment>
<dbReference type="EC" id="1.1.99.29" evidence="5"/>
<dbReference type="EMBL" id="KF534750">
    <property type="protein sequence ID" value="AHA85313.1"/>
    <property type="molecule type" value="mRNA"/>
</dbReference>
<dbReference type="SMR" id="V5NDL4"/>
<dbReference type="CAZy" id="AA3">
    <property type="family name" value="Auxiliary Activities 3"/>
</dbReference>
<dbReference type="GlyCosmos" id="V5NDL4">
    <property type="glycosylation" value="8 sites, No reported glycans"/>
</dbReference>
<dbReference type="BRENDA" id="1.1.99.29">
    <property type="organism ID" value="179"/>
</dbReference>
<dbReference type="GO" id="GO:0005576">
    <property type="term" value="C:extracellular region"/>
    <property type="evidence" value="ECO:0007669"/>
    <property type="project" value="UniProtKB-SubCell"/>
</dbReference>
<dbReference type="GO" id="GO:0050660">
    <property type="term" value="F:flavin adenine dinucleotide binding"/>
    <property type="evidence" value="ECO:0007669"/>
    <property type="project" value="InterPro"/>
</dbReference>
<dbReference type="GO" id="GO:0033718">
    <property type="term" value="F:pyranose dehydrogenase (acceptor) activity"/>
    <property type="evidence" value="ECO:0007669"/>
    <property type="project" value="UniProtKB-EC"/>
</dbReference>
<dbReference type="Gene3D" id="3.50.50.60">
    <property type="entry name" value="FAD/NAD(P)-binding domain"/>
    <property type="match status" value="1"/>
</dbReference>
<dbReference type="Gene3D" id="3.30.560.10">
    <property type="entry name" value="Glucose Oxidase, domain 3"/>
    <property type="match status" value="1"/>
</dbReference>
<dbReference type="InterPro" id="IPR036188">
    <property type="entry name" value="FAD/NAD-bd_sf"/>
</dbReference>
<dbReference type="InterPro" id="IPR012132">
    <property type="entry name" value="GMC_OxRdtase"/>
</dbReference>
<dbReference type="InterPro" id="IPR000172">
    <property type="entry name" value="GMC_OxRdtase_N"/>
</dbReference>
<dbReference type="InterPro" id="IPR007867">
    <property type="entry name" value="GMC_OxRtase_C"/>
</dbReference>
<dbReference type="PANTHER" id="PTHR11552">
    <property type="entry name" value="GLUCOSE-METHANOL-CHOLINE GMC OXIDOREDUCTASE"/>
    <property type="match status" value="1"/>
</dbReference>
<dbReference type="PANTHER" id="PTHR11552:SF201">
    <property type="entry name" value="GLUCOSE-METHANOL-CHOLINE OXIDOREDUCTASE N-TERMINAL DOMAIN-CONTAINING PROTEIN"/>
    <property type="match status" value="1"/>
</dbReference>
<dbReference type="Pfam" id="PF05199">
    <property type="entry name" value="GMC_oxred_C"/>
    <property type="match status" value="1"/>
</dbReference>
<dbReference type="Pfam" id="PF00732">
    <property type="entry name" value="GMC_oxred_N"/>
    <property type="match status" value="1"/>
</dbReference>
<dbReference type="PIRSF" id="PIRSF000137">
    <property type="entry name" value="Alcohol_oxidase"/>
    <property type="match status" value="1"/>
</dbReference>
<dbReference type="SUPFAM" id="SSF54373">
    <property type="entry name" value="FAD-linked reductases, C-terminal domain"/>
    <property type="match status" value="1"/>
</dbReference>
<dbReference type="SUPFAM" id="SSF51905">
    <property type="entry name" value="FAD/NAD(P)-binding domain"/>
    <property type="match status" value="1"/>
</dbReference>
<evidence type="ECO:0000250" key="1">
    <source>
        <dbReference type="UniProtKB" id="E4QP00"/>
    </source>
</evidence>
<evidence type="ECO:0000250" key="2">
    <source>
        <dbReference type="UniProtKB" id="Q3L245"/>
    </source>
</evidence>
<evidence type="ECO:0000255" key="3"/>
<evidence type="ECO:0000255" key="4">
    <source>
        <dbReference type="PROSITE-ProRule" id="PRU00498"/>
    </source>
</evidence>
<evidence type="ECO:0000269" key="5">
    <source>
    </source>
</evidence>
<evidence type="ECO:0000303" key="6">
    <source>
    </source>
</evidence>
<evidence type="ECO:0000305" key="7"/>
<name>PDH1_AGACM</name>
<protein>
    <recommendedName>
        <fullName evidence="6">Pyranose dehydrogenase</fullName>
        <shortName evidence="6">PDH</shortName>
        <ecNumber evidence="5">1.1.99.29</ecNumber>
    </recommendedName>
    <alternativeName>
        <fullName evidence="2">Pyranose:quinone oxidoreductase 1</fullName>
    </alternativeName>
</protein>
<proteinExistence type="evidence at protein level"/>
<accession>V5NDL4</accession>
<reference key="1">
    <citation type="journal article" date="2013" name="Biomolecules">
        <title>Pyranose dehydrogenase from Agaricus campestris and Agaricus xanthoderma: Characterization and applications in carbohydrate conversions.</title>
        <authorList>
            <person name="Staudigl P."/>
            <person name="Krondorfer I."/>
            <person name="Haltrich D."/>
            <person name="Peterbauer C.K."/>
        </authorList>
    </citation>
    <scope>NUCLEOTIDE SEQUENCE [MRNA]</scope>
    <scope>FUNCTION</scope>
    <scope>CATALYTIC ACTIVITY</scope>
    <scope>BIOPHYSICOCHEMICAL PROPERTIES</scope>
    <scope>SUBUNIT</scope>
    <scope>GLYCOSYLATION</scope>
    <source>
        <strain>CCBAS 20649</strain>
    </source>
</reference>
<gene>
    <name evidence="6" type="primary">pdh1</name>
</gene>